<dbReference type="EC" id="4.1.1.19" evidence="1"/>
<dbReference type="EMBL" id="CP000866">
    <property type="protein sequence ID" value="ABX13076.1"/>
    <property type="molecule type" value="Genomic_DNA"/>
</dbReference>
<dbReference type="RefSeq" id="WP_012215563.1">
    <property type="nucleotide sequence ID" value="NC_010085.1"/>
</dbReference>
<dbReference type="SMR" id="A9A5S1"/>
<dbReference type="STRING" id="436308.Nmar_1180"/>
<dbReference type="EnsemblBacteria" id="ABX13076">
    <property type="protein sequence ID" value="ABX13076"/>
    <property type="gene ID" value="Nmar_1180"/>
</dbReference>
<dbReference type="GeneID" id="5773086"/>
<dbReference type="KEGG" id="nmr:Nmar_1180"/>
<dbReference type="eggNOG" id="arCOG04490">
    <property type="taxonomic scope" value="Archaea"/>
</dbReference>
<dbReference type="HOGENOM" id="CLU_114389_0_0_2"/>
<dbReference type="InParanoid" id="A9A5S1"/>
<dbReference type="OrthoDB" id="30748at2157"/>
<dbReference type="PhylomeDB" id="A9A5S1"/>
<dbReference type="Proteomes" id="UP000000792">
    <property type="component" value="Chromosome"/>
</dbReference>
<dbReference type="GO" id="GO:0008792">
    <property type="term" value="F:arginine decarboxylase activity"/>
    <property type="evidence" value="ECO:0007669"/>
    <property type="project" value="UniProtKB-UniRule"/>
</dbReference>
<dbReference type="GO" id="GO:0006527">
    <property type="term" value="P:arginine catabolic process"/>
    <property type="evidence" value="ECO:0007669"/>
    <property type="project" value="InterPro"/>
</dbReference>
<dbReference type="Gene3D" id="3.50.20.10">
    <property type="entry name" value="Pyruvoyl-Dependent Histidine Decarboxylase, subunit B"/>
    <property type="match status" value="1"/>
</dbReference>
<dbReference type="HAMAP" id="MF_01404">
    <property type="entry name" value="PvlArgDC"/>
    <property type="match status" value="1"/>
</dbReference>
<dbReference type="InterPro" id="IPR016104">
    <property type="entry name" value="Pyr-dep_his/arg-deCO2ase"/>
</dbReference>
<dbReference type="InterPro" id="IPR016105">
    <property type="entry name" value="Pyr-dep_his/arg-deCO2ase_sand"/>
</dbReference>
<dbReference type="InterPro" id="IPR002724">
    <property type="entry name" value="Pyruvoyl-dep_arg_deCO2ase"/>
</dbReference>
<dbReference type="NCBIfam" id="TIGR00286">
    <property type="entry name" value="pyruvoyl-dependent arginine decarboxylase"/>
    <property type="match status" value="1"/>
</dbReference>
<dbReference type="PANTHER" id="PTHR40438">
    <property type="entry name" value="PYRUVOYL-DEPENDENT ARGININE DECARBOXYLASE"/>
    <property type="match status" value="1"/>
</dbReference>
<dbReference type="PANTHER" id="PTHR40438:SF1">
    <property type="entry name" value="PYRUVOYL-DEPENDENT ARGININE DECARBOXYLASE"/>
    <property type="match status" value="1"/>
</dbReference>
<dbReference type="Pfam" id="PF01862">
    <property type="entry name" value="PvlArgDC"/>
    <property type="match status" value="1"/>
</dbReference>
<dbReference type="PIRSF" id="PIRSF005216">
    <property type="entry name" value="Pyruvoyl-dep_arg_deCO2ase"/>
    <property type="match status" value="1"/>
</dbReference>
<dbReference type="SFLD" id="SFLDG01170">
    <property type="entry name" value="Pyruvoyl-dependent_arginine_de"/>
    <property type="match status" value="1"/>
</dbReference>
<dbReference type="SFLD" id="SFLDS00055">
    <property type="entry name" value="Pyruvoyl-Dependent_Histidine/A"/>
    <property type="match status" value="1"/>
</dbReference>
<dbReference type="SUPFAM" id="SSF56271">
    <property type="entry name" value="Pyruvoyl-dependent histidine and arginine decarboxylases"/>
    <property type="match status" value="1"/>
</dbReference>
<name>PDAD_NITMS</name>
<reference key="1">
    <citation type="journal article" date="2010" name="Proc. Natl. Acad. Sci. U.S.A.">
        <title>Nitrosopumilus maritimus genome reveals unique mechanisms for nitrification and autotrophy in globally distributed marine crenarchaea.</title>
        <authorList>
            <person name="Walker C.B."/>
            <person name="de la Torre J.R."/>
            <person name="Klotz M.G."/>
            <person name="Urakawa H."/>
            <person name="Pinel N."/>
            <person name="Arp D.J."/>
            <person name="Brochier-Armanet C."/>
            <person name="Chain P.S."/>
            <person name="Chan P.P."/>
            <person name="Gollabgir A."/>
            <person name="Hemp J."/>
            <person name="Hugler M."/>
            <person name="Karr E.A."/>
            <person name="Konneke M."/>
            <person name="Shin M."/>
            <person name="Lawton T.J."/>
            <person name="Lowe T."/>
            <person name="Martens-Habbena W."/>
            <person name="Sayavedra-Soto L.A."/>
            <person name="Lang D."/>
            <person name="Sievert S.M."/>
            <person name="Rosenzweig A.C."/>
            <person name="Manning G."/>
            <person name="Stahl D.A."/>
        </authorList>
    </citation>
    <scope>NUCLEOTIDE SEQUENCE [LARGE SCALE GENOMIC DNA]</scope>
    <source>
        <strain>SCM1</strain>
    </source>
</reference>
<proteinExistence type="inferred from homology"/>
<organism>
    <name type="scientific">Nitrosopumilus maritimus (strain SCM1)</name>
    <dbReference type="NCBI Taxonomy" id="436308"/>
    <lineage>
        <taxon>Archaea</taxon>
        <taxon>Nitrososphaerota</taxon>
        <taxon>Nitrososphaeria</taxon>
        <taxon>Nitrosopumilales</taxon>
        <taxon>Nitrosopumilaceae</taxon>
        <taxon>Nitrosopumilus</taxon>
    </lineage>
</organism>
<protein>
    <recommendedName>
        <fullName evidence="1">Pyruvoyl-dependent arginine decarboxylase</fullName>
        <shortName evidence="1">PvlArgDC</shortName>
        <ecNumber evidence="1">4.1.1.19</ecNumber>
    </recommendedName>
    <component>
        <recommendedName>
            <fullName evidence="1">Pyruvoyl-dependent arginine decarboxylase subunit beta</fullName>
        </recommendedName>
    </component>
    <component>
        <recommendedName>
            <fullName evidence="1">Pyruvoyl-dependent arginine decarboxylase subunit alpha</fullName>
        </recommendedName>
    </component>
</protein>
<gene>
    <name evidence="1" type="primary">pdaD</name>
    <name type="ordered locus">Nmar_1180</name>
</gene>
<keyword id="KW-0210">Decarboxylase</keyword>
<keyword id="KW-0456">Lyase</keyword>
<keyword id="KW-0670">Pyruvate</keyword>
<keyword id="KW-1185">Reference proteome</keyword>
<feature type="chain" id="PRO_1000145472" description="Pyruvoyl-dependent arginine decarboxylase subunit beta" evidence="1">
    <location>
        <begin position="1"/>
        <end position="43"/>
    </location>
</feature>
<feature type="chain" id="PRO_1000145473" description="Pyruvoyl-dependent arginine decarboxylase subunit alpha" evidence="1">
    <location>
        <begin position="44"/>
        <end position="183"/>
    </location>
</feature>
<feature type="site" description="Cleavage (non-hydrolytic)" evidence="1">
    <location>
        <begin position="43"/>
        <end position="44"/>
    </location>
</feature>
<feature type="modified residue" description="Pyruvic acid (Ser)" evidence="1">
    <location>
        <position position="44"/>
    </location>
</feature>
<evidence type="ECO:0000255" key="1">
    <source>
        <dbReference type="HAMAP-Rule" id="MF_01404"/>
    </source>
</evidence>
<accession>A9A5S1</accession>
<comment type="catalytic activity">
    <reaction evidence="1">
        <text>L-arginine + H(+) = agmatine + CO2</text>
        <dbReference type="Rhea" id="RHEA:17641"/>
        <dbReference type="ChEBI" id="CHEBI:15378"/>
        <dbReference type="ChEBI" id="CHEBI:16526"/>
        <dbReference type="ChEBI" id="CHEBI:32682"/>
        <dbReference type="ChEBI" id="CHEBI:58145"/>
        <dbReference type="EC" id="4.1.1.19"/>
    </reaction>
</comment>
<comment type="cofactor">
    <cofactor evidence="1">
        <name>pyruvate</name>
        <dbReference type="ChEBI" id="CHEBI:15361"/>
    </cofactor>
    <text evidence="1">Binds 1 pyruvoyl group covalently per subunit.</text>
</comment>
<comment type="similarity">
    <text evidence="1">Belongs to the PdaD family.</text>
</comment>
<sequence>MLDLVAKKLFLTRGKGIHEDRLTSFEYALRDAGIAGTNLVLISSIFPPKAKLISRKEGLQQIKPGQILFTIYSKNQTNEPHRMCSASVGIAQPKDKDRYGYLSEYEAFGQTETQAGDYAEDIAAQMLASSLGIPFDVDKNWDEKRQQWKISGEIYKTQNITQQTRGDKDGKWTTVFAAAVLLV</sequence>